<proteinExistence type="evidence at protein level"/>
<name>AKCL2_PIG</name>
<gene>
    <name type="primary">AKR1E2</name>
    <name type="synonym">AKR1CL2</name>
</gene>
<feature type="chain" id="PRO_0000124674" description="1,5-anhydro-D-fructose reductase">
    <location>
        <begin position="1"/>
        <end position="301"/>
    </location>
</feature>
<feature type="active site" description="Proton donor" evidence="1">
    <location>
        <position position="40"/>
    </location>
</feature>
<feature type="binding site" evidence="1">
    <location>
        <position position="35"/>
    </location>
    <ligand>
        <name>NADP(+)</name>
        <dbReference type="ChEBI" id="CHEBI:58349"/>
    </ligand>
</feature>
<feature type="binding site" evidence="1">
    <location>
        <position position="102"/>
    </location>
    <ligand>
        <name>substrate</name>
    </ligand>
</feature>
<feature type="binding site" evidence="1">
    <location>
        <position position="175"/>
    </location>
    <ligand>
        <name>NADP(+)</name>
        <dbReference type="ChEBI" id="CHEBI:58349"/>
    </ligand>
</feature>
<feature type="binding site" evidence="1">
    <location>
        <begin position="246"/>
        <end position="258"/>
    </location>
    <ligand>
        <name>NADP(+)</name>
        <dbReference type="ChEBI" id="CHEBI:58349"/>
    </ligand>
</feature>
<feature type="site" description="Lowers pKa of active site Tyr" evidence="2">
    <location>
        <position position="69"/>
    </location>
</feature>
<feature type="splice variant" id="VSP_037445" description="In isoform Short." evidence="4">
    <original>I</original>
    <variation>M</variation>
    <location>
        <position position="288"/>
    </location>
</feature>
<feature type="splice variant" id="VSP_037446" description="In isoform Short." evidence="4">
    <location>
        <begin position="289"/>
        <end position="301"/>
    </location>
</feature>
<accession>P82125</accession>
<accession>Q1KLB5</accession>
<sequence length="301" mass="34107">MEKIPVLGLGTWQAAPGEVTEAVKVAIDTGYRHFDCAYLYHNENEVGVGIQAKIDEGVVRREDLFIVSKLWCTCHKKSLVKSACTRSLKALKLQYLDLYLIHWPMGFKPGEVDLPVDRSGMIVASNTDFLDTWEAMEDLVIEGLVRAIGVSNFNHEQLERLLNKPNLRVKPVTNQIECHPYLTQKKLISFCQSRNVSVTAYRPLGGSSEGVPLLEDPVIQTIAQKHGKSAAQILIRFQIQRNVIVIPKSVNPKRILENFQVFDFELSEQDMTDLLGLDRNLRLSAFPIAENHKDYPFKAEY</sequence>
<evidence type="ECO:0000250" key="1">
    <source>
        <dbReference type="UniProtKB" id="O60218"/>
    </source>
</evidence>
<evidence type="ECO:0000250" key="2">
    <source>
        <dbReference type="UniProtKB" id="P14550"/>
    </source>
</evidence>
<evidence type="ECO:0000269" key="3">
    <source>
    </source>
</evidence>
<evidence type="ECO:0000303" key="4">
    <source>
    </source>
</evidence>
<evidence type="ECO:0000305" key="5"/>
<comment type="function">
    <text evidence="3">Catalyzes the NADPH-dependent reduction of 1,5-anhydro-D-fructose (AF) to 1,5-anhydro-D-glucitol.</text>
</comment>
<comment type="catalytic activity">
    <reaction evidence="3">
        <text>1,5-anhydro-D-glucitol + NADP(+) = 1,5-anhydro-D-fructose + NADPH + H(+)</text>
        <dbReference type="Rhea" id="RHEA:20665"/>
        <dbReference type="ChEBI" id="CHEBI:15378"/>
        <dbReference type="ChEBI" id="CHEBI:16070"/>
        <dbReference type="ChEBI" id="CHEBI:16715"/>
        <dbReference type="ChEBI" id="CHEBI:57783"/>
        <dbReference type="ChEBI" id="CHEBI:58349"/>
        <dbReference type="EC" id="1.1.1.263"/>
    </reaction>
</comment>
<comment type="activity regulation">
    <text evidence="3">Inhibited by p-chloromercuribenzoic acid and alkyliodines.</text>
</comment>
<comment type="biophysicochemical properties">
    <kinetics>
        <KM evidence="3">0.44 mM for 1,5-anhydro-D-fructose</KM>
    </kinetics>
    <phDependence>
        <text evidence="3">Optimum pH is 7.0.</text>
    </phDependence>
    <temperatureDependence>
        <text evidence="3">Optimum temperature is 37 degrees Celsius.</text>
    </temperatureDependence>
</comment>
<comment type="subunit">
    <text evidence="3">Monomer.</text>
</comment>
<comment type="alternative products">
    <event type="alternative splicing"/>
    <isoform>
        <id>P82125-1</id>
        <name>Long</name>
        <sequence type="displayed"/>
    </isoform>
    <isoform>
        <id>P82125-2</id>
        <name>Short</name>
        <sequence type="described" ref="VSP_037445 VSP_037446"/>
    </isoform>
</comment>
<comment type="miscellaneous">
    <molecule>Isoform Short</molecule>
    <text evidence="5">Due to exon inclusion.</text>
</comment>
<comment type="similarity">
    <text evidence="5">Belongs to the aldo/keto reductase family.</text>
</comment>
<organism>
    <name type="scientific">Sus scrofa</name>
    <name type="common">Pig</name>
    <dbReference type="NCBI Taxonomy" id="9823"/>
    <lineage>
        <taxon>Eukaryota</taxon>
        <taxon>Metazoa</taxon>
        <taxon>Chordata</taxon>
        <taxon>Craniata</taxon>
        <taxon>Vertebrata</taxon>
        <taxon>Euteleostomi</taxon>
        <taxon>Mammalia</taxon>
        <taxon>Eutheria</taxon>
        <taxon>Laurasiatheria</taxon>
        <taxon>Artiodactyla</taxon>
        <taxon>Suina</taxon>
        <taxon>Suidae</taxon>
        <taxon>Sus</taxon>
    </lineage>
</organism>
<protein>
    <recommendedName>
        <fullName>1,5-anhydro-D-fructose reductase</fullName>
        <shortName>AF reductase</shortName>
        <ecNumber evidence="3">1.1.1.263</ecNumber>
    </recommendedName>
    <alternativeName>
        <fullName>Aldo-keto reductase family 1 member C-like protein 2</fullName>
        <shortName>Aldo-keto reductase family 1 member CL2</shortName>
    </alternativeName>
    <alternativeName>
        <fullName>Aldo-keto reductase family 1 member E2</fullName>
    </alternativeName>
</protein>
<reference key="1">
    <citation type="journal article" date="2006" name="BMC Vet. Res.">
        <title>Characterization of the aldo-keto reductase 1C gene cluster on pig chromosome 10: possible associations with reproductive traits.</title>
        <authorList>
            <person name="Nonneman D.J."/>
            <person name="Wise T.H."/>
            <person name="Ford J.J."/>
            <person name="Kuehn L.A."/>
            <person name="Rohrer G.A."/>
        </authorList>
    </citation>
    <scope>NUCLEOTIDE SEQUENCE [MRNA] (ISOFORM SHORT)</scope>
</reference>
<reference key="2">
    <citation type="journal article" date="1998" name="J. Biochem.">
        <title>Purification and some properties of a hepatic NADPH-dependent reductase that specifically acts on 1,5-anhydro-D-fructose.</title>
        <authorList>
            <person name="Sakuma M."/>
            <person name="Kametani S."/>
            <person name="Akanuma H."/>
        </authorList>
    </citation>
    <scope>PROTEIN SEQUENCE OF 3-69; 92-131; 171-185; 188-223 AND 253-298</scope>
    <scope>FUNCTION</scope>
    <scope>CATALYTIC ACTIVITY</scope>
    <scope>BIOPHYSICOCHEMICAL PROPERTIES</scope>
    <scope>SUBUNIT</scope>
    <scope>ACTIVITY REGULATION</scope>
    <source>
        <tissue>Liver</tissue>
    </source>
</reference>
<reference key="3">
    <citation type="journal article" date="2004" name="Nucleic Acids Res.">
        <title>PEDE (Pig EST Data Explorer): construction of a database for ESTs derived from porcine full-length cDNA libraries.</title>
        <authorList>
            <person name="Uenishi H."/>
            <person name="Eguchi T."/>
            <person name="Suzuki K."/>
            <person name="Sawazaki T."/>
            <person name="Toki D."/>
            <person name="Shinkai H."/>
            <person name="Okumura N."/>
            <person name="Hamasima N."/>
            <person name="Awata T."/>
        </authorList>
    </citation>
    <scope>NUCLEOTIDE SEQUENCE [LARGE SCALE MRNA] OF 169-301 (ISOFORM LONG)</scope>
</reference>
<dbReference type="EC" id="1.1.1.263" evidence="3"/>
<dbReference type="EMBL" id="DQ474064">
    <property type="protein sequence ID" value="ABF18830.1"/>
    <property type="molecule type" value="mRNA"/>
</dbReference>
<dbReference type="EMBL" id="DB808243">
    <property type="status" value="NOT_ANNOTATED_CDS"/>
    <property type="molecule type" value="mRNA"/>
</dbReference>
<dbReference type="RefSeq" id="NP_001038033.2">
    <molecule id="P82125-1"/>
    <property type="nucleotide sequence ID" value="NM_001044568.3"/>
</dbReference>
<dbReference type="RefSeq" id="XP_013835805.1">
    <molecule id="P82125-1"/>
    <property type="nucleotide sequence ID" value="XM_013980351.2"/>
</dbReference>
<dbReference type="RefSeq" id="XP_013835806.1">
    <molecule id="P82125-1"/>
    <property type="nucleotide sequence ID" value="XM_013980352.2"/>
</dbReference>
<dbReference type="RefSeq" id="XP_013835811.1">
    <property type="nucleotide sequence ID" value="XM_013980357.1"/>
</dbReference>
<dbReference type="RefSeq" id="XP_013835812.1">
    <property type="nucleotide sequence ID" value="XM_013980358.1"/>
</dbReference>
<dbReference type="RefSeq" id="XP_020919734.1">
    <molecule id="P82125-1"/>
    <property type="nucleotide sequence ID" value="XM_021064075.1"/>
</dbReference>
<dbReference type="RefSeq" id="XP_020919735.1">
    <molecule id="P82125-1"/>
    <property type="nucleotide sequence ID" value="XM_021064076.1"/>
</dbReference>
<dbReference type="SMR" id="P82125"/>
<dbReference type="FunCoup" id="P82125">
    <property type="interactions" value="198"/>
</dbReference>
<dbReference type="STRING" id="9823.ENSSSCP00000011891"/>
<dbReference type="PaxDb" id="9823-ENSSSCP00000011891"/>
<dbReference type="PeptideAtlas" id="P82125"/>
<dbReference type="Ensembl" id="ENSSSCT00000052191.2">
    <molecule id="P82125-1"/>
    <property type="protein sequence ID" value="ENSSSCP00000046702.2"/>
    <property type="gene ID" value="ENSSSCG00000036941.3"/>
</dbReference>
<dbReference type="Ensembl" id="ENSSSCT00025032851.1">
    <molecule id="P82125-1"/>
    <property type="protein sequence ID" value="ENSSSCP00025013710.1"/>
    <property type="gene ID" value="ENSSSCG00025024226.1"/>
</dbReference>
<dbReference type="Ensembl" id="ENSSSCT00035029808.1">
    <molecule id="P82125-1"/>
    <property type="protein sequence ID" value="ENSSSCP00035011546.1"/>
    <property type="gene ID" value="ENSSSCG00035022798.1"/>
</dbReference>
<dbReference type="Ensembl" id="ENSSSCT00045048830.1">
    <molecule id="P82125-1"/>
    <property type="protein sequence ID" value="ENSSSCP00045033959.1"/>
    <property type="gene ID" value="ENSSSCG00045028552.1"/>
</dbReference>
<dbReference type="Ensembl" id="ENSSSCT00055002173.1">
    <molecule id="P82125-1"/>
    <property type="protein sequence ID" value="ENSSSCP00055001633.1"/>
    <property type="gene ID" value="ENSSSCG00055001205.1"/>
</dbReference>
<dbReference type="Ensembl" id="ENSSSCT00060086891.1">
    <molecule id="P82125-1"/>
    <property type="protein sequence ID" value="ENSSSCP00060037590.1"/>
    <property type="gene ID" value="ENSSSCG00060063649.1"/>
</dbReference>
<dbReference type="Ensembl" id="ENSSSCT00065085447.1">
    <molecule id="P82125-1"/>
    <property type="protein sequence ID" value="ENSSSCP00065037345.1"/>
    <property type="gene ID" value="ENSSSCG00065062289.1"/>
</dbReference>
<dbReference type="Ensembl" id="ENSSSCT00065085458.1">
    <molecule id="P82125-1"/>
    <property type="protein sequence ID" value="ENSSSCP00065037352.1"/>
    <property type="gene ID" value="ENSSSCG00065062289.1"/>
</dbReference>
<dbReference type="Ensembl" id="ENSSSCT00070011622.1">
    <molecule id="P82125-1"/>
    <property type="protein sequence ID" value="ENSSSCP00070009575.1"/>
    <property type="gene ID" value="ENSSSCG00070006087.1"/>
</dbReference>
<dbReference type="Ensembl" id="ENSSSCT00070011628.1">
    <molecule id="P82125-1"/>
    <property type="protein sequence ID" value="ENSSSCP00070009581.1"/>
    <property type="gene ID" value="ENSSSCG00070006087.1"/>
</dbReference>
<dbReference type="Ensembl" id="ENSSSCT00085022446">
    <molecule id="P82125-1"/>
    <property type="protein sequence ID" value="ENSSSCP00085015498"/>
    <property type="gene ID" value="ENSSSCG00085011917"/>
</dbReference>
<dbReference type="Ensembl" id="ENSSSCT00105039108">
    <molecule id="P82125-1"/>
    <property type="protein sequence ID" value="ENSSSCP00105027038"/>
    <property type="gene ID" value="ENSSSCG00105020509"/>
</dbReference>
<dbReference type="Ensembl" id="ENSSSCT00110039190">
    <molecule id="P82125-1"/>
    <property type="protein sequence ID" value="ENSSSCP00110027103"/>
    <property type="gene ID" value="ENSSSCG00110020315"/>
</dbReference>
<dbReference type="GeneID" id="733633"/>
<dbReference type="KEGG" id="ssc:733633"/>
<dbReference type="CTD" id="83592"/>
<dbReference type="eggNOG" id="KOG1577">
    <property type="taxonomic scope" value="Eukaryota"/>
</dbReference>
<dbReference type="GeneTree" id="ENSGT00940000153272"/>
<dbReference type="HOGENOM" id="CLU_023205_0_0_1"/>
<dbReference type="InParanoid" id="P82125"/>
<dbReference type="OMA" id="AWKAMEG"/>
<dbReference type="OrthoDB" id="416253at2759"/>
<dbReference type="TreeFam" id="TF106492"/>
<dbReference type="BioCyc" id="MetaCyc:MONOMER-17139"/>
<dbReference type="Proteomes" id="UP000008227">
    <property type="component" value="Chromosome 10"/>
</dbReference>
<dbReference type="Proteomes" id="UP000314985">
    <property type="component" value="Chromosome 10"/>
</dbReference>
<dbReference type="Proteomes" id="UP000694570">
    <property type="component" value="Unplaced"/>
</dbReference>
<dbReference type="Proteomes" id="UP000694571">
    <property type="component" value="Unplaced"/>
</dbReference>
<dbReference type="Proteomes" id="UP000694720">
    <property type="component" value="Unplaced"/>
</dbReference>
<dbReference type="Proteomes" id="UP000694722">
    <property type="component" value="Unplaced"/>
</dbReference>
<dbReference type="Proteomes" id="UP000694723">
    <property type="component" value="Unplaced"/>
</dbReference>
<dbReference type="Proteomes" id="UP000694724">
    <property type="component" value="Unplaced"/>
</dbReference>
<dbReference type="Proteomes" id="UP000694725">
    <property type="component" value="Unplaced"/>
</dbReference>
<dbReference type="Proteomes" id="UP000694726">
    <property type="component" value="Unplaced"/>
</dbReference>
<dbReference type="Proteomes" id="UP000694727">
    <property type="component" value="Unplaced"/>
</dbReference>
<dbReference type="Proteomes" id="UP000694728">
    <property type="component" value="Unplaced"/>
</dbReference>
<dbReference type="Bgee" id="ENSSSCG00000036941">
    <property type="expression patterns" value="Expressed in metanephros cortex and 35 other cell types or tissues"/>
</dbReference>
<dbReference type="ExpressionAtlas" id="P82125">
    <property type="expression patterns" value="baseline and differential"/>
</dbReference>
<dbReference type="GO" id="GO:0005829">
    <property type="term" value="C:cytosol"/>
    <property type="evidence" value="ECO:0000318"/>
    <property type="project" value="GO_Central"/>
</dbReference>
<dbReference type="GO" id="GO:0050571">
    <property type="term" value="F:1,5-anhydro-D-fructose reductase activity"/>
    <property type="evidence" value="ECO:0007669"/>
    <property type="project" value="UniProtKB-EC"/>
</dbReference>
<dbReference type="GO" id="GO:0004032">
    <property type="term" value="F:aldose reductase (NADPH) activity"/>
    <property type="evidence" value="ECO:0000318"/>
    <property type="project" value="GO_Central"/>
</dbReference>
<dbReference type="CDD" id="cd19110">
    <property type="entry name" value="AKR_AKR1E1-2"/>
    <property type="match status" value="1"/>
</dbReference>
<dbReference type="FunFam" id="3.20.20.100:FF:000030">
    <property type="entry name" value="Aldo-keto reductase family 1 member E2"/>
    <property type="match status" value="1"/>
</dbReference>
<dbReference type="Gene3D" id="3.20.20.100">
    <property type="entry name" value="NADP-dependent oxidoreductase domain"/>
    <property type="match status" value="1"/>
</dbReference>
<dbReference type="InterPro" id="IPR020471">
    <property type="entry name" value="AKR"/>
</dbReference>
<dbReference type="InterPro" id="IPR044484">
    <property type="entry name" value="AKR1E2"/>
</dbReference>
<dbReference type="InterPro" id="IPR018170">
    <property type="entry name" value="Aldo/ket_reductase_CS"/>
</dbReference>
<dbReference type="InterPro" id="IPR023210">
    <property type="entry name" value="NADP_OxRdtase_dom"/>
</dbReference>
<dbReference type="InterPro" id="IPR036812">
    <property type="entry name" value="NADP_OxRdtase_dom_sf"/>
</dbReference>
<dbReference type="PANTHER" id="PTHR11732">
    <property type="entry name" value="ALDO/KETO REDUCTASE"/>
    <property type="match status" value="1"/>
</dbReference>
<dbReference type="Pfam" id="PF00248">
    <property type="entry name" value="Aldo_ket_red"/>
    <property type="match status" value="1"/>
</dbReference>
<dbReference type="PIRSF" id="PIRSF000097">
    <property type="entry name" value="AKR"/>
    <property type="match status" value="1"/>
</dbReference>
<dbReference type="PRINTS" id="PR00069">
    <property type="entry name" value="ALDKETRDTASE"/>
</dbReference>
<dbReference type="SUPFAM" id="SSF51430">
    <property type="entry name" value="NAD(P)-linked oxidoreductase"/>
    <property type="match status" value="1"/>
</dbReference>
<dbReference type="PROSITE" id="PS00798">
    <property type="entry name" value="ALDOKETO_REDUCTASE_1"/>
    <property type="match status" value="1"/>
</dbReference>
<dbReference type="PROSITE" id="PS00062">
    <property type="entry name" value="ALDOKETO_REDUCTASE_2"/>
    <property type="match status" value="1"/>
</dbReference>
<dbReference type="PROSITE" id="PS00063">
    <property type="entry name" value="ALDOKETO_REDUCTASE_3"/>
    <property type="match status" value="1"/>
</dbReference>
<keyword id="KW-0025">Alternative splicing</keyword>
<keyword id="KW-0903">Direct protein sequencing</keyword>
<keyword id="KW-0521">NADP</keyword>
<keyword id="KW-0560">Oxidoreductase</keyword>
<keyword id="KW-1185">Reference proteome</keyword>